<proteinExistence type="evidence at transcript level"/>
<reference key="1">
    <citation type="submission" date="1999-05" db="EMBL/GenBank/DDBJ databases">
        <title>Isolation of Arabidopsis cDNA for histidinol dehydrogenase.</title>
        <authorList>
            <person name="Fujimori K."/>
        </authorList>
    </citation>
    <scope>NUCLEOTIDE SEQUENCE [MRNA] (ISOFORM 1)</scope>
</reference>
<reference key="2">
    <citation type="journal article" date="1997" name="DNA Res.">
        <title>Structural analysis of Arabidopsis thaliana chromosome 5. III. Sequence features of the regions of 1,191,918 bp covered by seventeen physically assigned P1 clones.</title>
        <authorList>
            <person name="Nakamura Y."/>
            <person name="Sato S."/>
            <person name="Kaneko T."/>
            <person name="Kotani H."/>
            <person name="Asamizu E."/>
            <person name="Miyajima N."/>
            <person name="Tabata S."/>
        </authorList>
    </citation>
    <scope>NUCLEOTIDE SEQUENCE [LARGE SCALE GENOMIC DNA]</scope>
    <source>
        <strain>cv. Columbia</strain>
    </source>
</reference>
<reference key="3">
    <citation type="journal article" date="2017" name="Plant J.">
        <title>Araport11: a complete reannotation of the Arabidopsis thaliana reference genome.</title>
        <authorList>
            <person name="Cheng C.Y."/>
            <person name="Krishnakumar V."/>
            <person name="Chan A.P."/>
            <person name="Thibaud-Nissen F."/>
            <person name="Schobel S."/>
            <person name="Town C.D."/>
        </authorList>
    </citation>
    <scope>GENOME REANNOTATION</scope>
    <source>
        <strain>cv. Columbia</strain>
    </source>
</reference>
<reference key="4">
    <citation type="journal article" date="2003" name="Science">
        <title>Empirical analysis of transcriptional activity in the Arabidopsis genome.</title>
        <authorList>
            <person name="Yamada K."/>
            <person name="Lim J."/>
            <person name="Dale J.M."/>
            <person name="Chen H."/>
            <person name="Shinn P."/>
            <person name="Palm C.J."/>
            <person name="Southwick A.M."/>
            <person name="Wu H.C."/>
            <person name="Kim C.J."/>
            <person name="Nguyen M."/>
            <person name="Pham P.K."/>
            <person name="Cheuk R.F."/>
            <person name="Karlin-Newmann G."/>
            <person name="Liu S.X."/>
            <person name="Lam B."/>
            <person name="Sakano H."/>
            <person name="Wu T."/>
            <person name="Yu G."/>
            <person name="Miranda M."/>
            <person name="Quach H.L."/>
            <person name="Tripp M."/>
            <person name="Chang C.H."/>
            <person name="Lee J.M."/>
            <person name="Toriumi M.J."/>
            <person name="Chan M.M."/>
            <person name="Tang C.C."/>
            <person name="Onodera C.S."/>
            <person name="Deng J.M."/>
            <person name="Akiyama K."/>
            <person name="Ansari Y."/>
            <person name="Arakawa T."/>
            <person name="Banh J."/>
            <person name="Banno F."/>
            <person name="Bowser L."/>
            <person name="Brooks S.Y."/>
            <person name="Carninci P."/>
            <person name="Chao Q."/>
            <person name="Choy N."/>
            <person name="Enju A."/>
            <person name="Goldsmith A.D."/>
            <person name="Gurjal M."/>
            <person name="Hansen N.F."/>
            <person name="Hayashizaki Y."/>
            <person name="Johnson-Hopson C."/>
            <person name="Hsuan V.W."/>
            <person name="Iida K."/>
            <person name="Karnes M."/>
            <person name="Khan S."/>
            <person name="Koesema E."/>
            <person name="Ishida J."/>
            <person name="Jiang P.X."/>
            <person name="Jones T."/>
            <person name="Kawai J."/>
            <person name="Kamiya A."/>
            <person name="Meyers C."/>
            <person name="Nakajima M."/>
            <person name="Narusaka M."/>
            <person name="Seki M."/>
            <person name="Sakurai T."/>
            <person name="Satou M."/>
            <person name="Tamse R."/>
            <person name="Vaysberg M."/>
            <person name="Wallender E.K."/>
            <person name="Wong C."/>
            <person name="Yamamura Y."/>
            <person name="Yuan S."/>
            <person name="Shinozaki K."/>
            <person name="Davis R.W."/>
            <person name="Theologis A."/>
            <person name="Ecker J.R."/>
        </authorList>
    </citation>
    <scope>NUCLEOTIDE SEQUENCE [LARGE SCALE MRNA] (ISOFORM 1)</scope>
    <source>
        <strain>cv. Columbia</strain>
    </source>
</reference>
<reference key="5">
    <citation type="submission" date="2002-03" db="EMBL/GenBank/DDBJ databases">
        <title>Full-length cDNA from Arabidopsis thaliana.</title>
        <authorList>
            <person name="Brover V.V."/>
            <person name="Troukhan M.E."/>
            <person name="Alexandrov N.A."/>
            <person name="Lu Y.-P."/>
            <person name="Flavell R.B."/>
            <person name="Feldmann K.A."/>
        </authorList>
    </citation>
    <scope>NUCLEOTIDE SEQUENCE [LARGE SCALE MRNA] (ISOFORM 2)</scope>
</reference>
<reference key="6">
    <citation type="journal article" date="2006" name="Amino Acids">
        <title>Histidine biosynthesis in plants.</title>
        <authorList>
            <person name="Stepansky A."/>
            <person name="Leustek T."/>
        </authorList>
    </citation>
    <scope>GENE FAMILY</scope>
    <scope>NOMENCLATURE</scope>
</reference>
<reference key="7">
    <citation type="journal article" date="2007" name="Plant Physiol.">
        <title>Genetic dissection of histidine biosynthesis in Arabidopsis.</title>
        <authorList>
            <person name="Muralla R."/>
            <person name="Sweeney C."/>
            <person name="Stepansky A."/>
            <person name="Leustek T."/>
            <person name="Meinke D."/>
        </authorList>
    </citation>
    <scope>GENE FAMILY</scope>
    <scope>NOMENCLATURE</scope>
</reference>
<organism>
    <name type="scientific">Arabidopsis thaliana</name>
    <name type="common">Mouse-ear cress</name>
    <dbReference type="NCBI Taxonomy" id="3702"/>
    <lineage>
        <taxon>Eukaryota</taxon>
        <taxon>Viridiplantae</taxon>
        <taxon>Streptophyta</taxon>
        <taxon>Embryophyta</taxon>
        <taxon>Tracheophyta</taxon>
        <taxon>Spermatophyta</taxon>
        <taxon>Magnoliopsida</taxon>
        <taxon>eudicotyledons</taxon>
        <taxon>Gunneridae</taxon>
        <taxon>Pentapetalae</taxon>
        <taxon>rosids</taxon>
        <taxon>malvids</taxon>
        <taxon>Brassicales</taxon>
        <taxon>Brassicaceae</taxon>
        <taxon>Camelineae</taxon>
        <taxon>Arabidopsis</taxon>
    </lineage>
</organism>
<feature type="transit peptide" description="Chloroplast" evidence="1">
    <location>
        <begin position="1"/>
        <end position="30"/>
    </location>
</feature>
<feature type="chain" id="PRO_0000007215" description="Histidinol dehydrogenase, chloroplastic">
    <location>
        <begin position="31"/>
        <end position="466"/>
    </location>
</feature>
<feature type="active site" description="Proton acceptor" evidence="1">
    <location>
        <position position="356"/>
    </location>
</feature>
<feature type="active site" description="Proton acceptor" evidence="1">
    <location>
        <position position="357"/>
    </location>
</feature>
<feature type="binding site" evidence="1">
    <location>
        <position position="155"/>
    </location>
    <ligand>
        <name>NAD(+)</name>
        <dbReference type="ChEBI" id="CHEBI:57540"/>
    </ligand>
</feature>
<feature type="binding site" evidence="1">
    <location>
        <position position="217"/>
    </location>
    <ligand>
        <name>NAD(+)</name>
        <dbReference type="ChEBI" id="CHEBI:57540"/>
    </ligand>
</feature>
<feature type="binding site" evidence="1">
    <location>
        <position position="240"/>
    </location>
    <ligand>
        <name>NAD(+)</name>
        <dbReference type="ChEBI" id="CHEBI:57540"/>
    </ligand>
</feature>
<feature type="binding site" evidence="1">
    <location>
        <position position="266"/>
    </location>
    <ligand>
        <name>substrate</name>
    </ligand>
</feature>
<feature type="binding site" evidence="1">
    <location>
        <position position="288"/>
    </location>
    <ligand>
        <name>substrate</name>
    </ligand>
</feature>
<feature type="binding site" evidence="1">
    <location>
        <position position="288"/>
    </location>
    <ligand>
        <name>Zn(2+)</name>
        <dbReference type="ChEBI" id="CHEBI:29105"/>
    </ligand>
</feature>
<feature type="binding site" evidence="1">
    <location>
        <position position="291"/>
    </location>
    <ligand>
        <name>substrate</name>
    </ligand>
</feature>
<feature type="binding site" evidence="1">
    <location>
        <position position="291"/>
    </location>
    <ligand>
        <name>Zn(2+)</name>
        <dbReference type="ChEBI" id="CHEBI:29105"/>
    </ligand>
</feature>
<feature type="binding site" evidence="1">
    <location>
        <position position="357"/>
    </location>
    <ligand>
        <name>substrate</name>
    </ligand>
</feature>
<feature type="binding site" evidence="1">
    <location>
        <position position="390"/>
    </location>
    <ligand>
        <name>substrate</name>
    </ligand>
</feature>
<feature type="binding site" evidence="1">
    <location>
        <position position="390"/>
    </location>
    <ligand>
        <name>Zn(2+)</name>
        <dbReference type="ChEBI" id="CHEBI:29105"/>
    </ligand>
</feature>
<feature type="binding site" evidence="1">
    <location>
        <position position="444"/>
    </location>
    <ligand>
        <name>substrate</name>
    </ligand>
</feature>
<feature type="binding site" evidence="1">
    <location>
        <position position="449"/>
    </location>
    <ligand>
        <name>substrate</name>
    </ligand>
</feature>
<feature type="binding site" evidence="1">
    <location>
        <position position="449"/>
    </location>
    <ligand>
        <name>Zn(2+)</name>
        <dbReference type="ChEBI" id="CHEBI:29105"/>
    </ligand>
</feature>
<feature type="splice variant" id="VSP_047341" description="In isoform 2." evidence="2">
    <original>MSLNLSRLSLLSSPRISISTHAPRK</original>
    <variation>MNEFVDQLRFT</variation>
    <location>
        <begin position="1"/>
        <end position="25"/>
    </location>
</feature>
<feature type="sequence conflict" description="In Ref. 2; BAB11037." evidence="3" ref="2">
    <original>K</original>
    <variation>KA</variation>
    <location>
        <position position="25"/>
    </location>
</feature>
<keyword id="KW-0025">Alternative splicing</keyword>
<keyword id="KW-0028">Amino-acid biosynthesis</keyword>
<keyword id="KW-0150">Chloroplast</keyword>
<keyword id="KW-0368">Histidine biosynthesis</keyword>
<keyword id="KW-0479">Metal-binding</keyword>
<keyword id="KW-0520">NAD</keyword>
<keyword id="KW-0560">Oxidoreductase</keyword>
<keyword id="KW-0934">Plastid</keyword>
<keyword id="KW-1185">Reference proteome</keyword>
<keyword id="KW-0809">Transit peptide</keyword>
<keyword id="KW-0862">Zinc</keyword>
<evidence type="ECO:0000250" key="1"/>
<evidence type="ECO:0000303" key="2">
    <source ref="5"/>
</evidence>
<evidence type="ECO:0000305" key="3"/>
<accession>Q9C5U8</accession>
<accession>F4KC60</accession>
<accession>Q8LA77</accession>
<accession>Q9FN00</accession>
<protein>
    <recommendedName>
        <fullName>Histidinol dehydrogenase, chloroplastic</fullName>
        <shortName>HDH</shortName>
        <ecNumber>1.1.1.23</ecNumber>
    </recommendedName>
    <alternativeName>
        <fullName>Protein HISTIDINE BIOSYNTHESIS 8</fullName>
    </alternativeName>
</protein>
<gene>
    <name type="primary">HISN8</name>
    <name type="synonym">HDH</name>
    <name type="ordered locus">At5g63890</name>
    <name type="ORF">MGI19.9</name>
</gene>
<dbReference type="EC" id="1.1.1.23"/>
<dbReference type="EMBL" id="AB027709">
    <property type="protein sequence ID" value="BAB40445.1"/>
    <property type="molecule type" value="mRNA"/>
</dbReference>
<dbReference type="EMBL" id="AB007646">
    <property type="protein sequence ID" value="BAB11037.1"/>
    <property type="molecule type" value="Genomic_DNA"/>
</dbReference>
<dbReference type="EMBL" id="CP002688">
    <property type="protein sequence ID" value="AED97811.1"/>
    <property type="molecule type" value="Genomic_DNA"/>
</dbReference>
<dbReference type="EMBL" id="CP002688">
    <property type="protein sequence ID" value="AED97812.1"/>
    <property type="molecule type" value="Genomic_DNA"/>
</dbReference>
<dbReference type="EMBL" id="AY039881">
    <property type="protein sequence ID" value="AAK63985.1"/>
    <property type="molecule type" value="mRNA"/>
</dbReference>
<dbReference type="EMBL" id="AY143900">
    <property type="protein sequence ID" value="AAN28839.1"/>
    <property type="molecule type" value="mRNA"/>
</dbReference>
<dbReference type="EMBL" id="AY087987">
    <property type="protein sequence ID" value="AAM65533.1"/>
    <property type="molecule type" value="mRNA"/>
</dbReference>
<dbReference type="RefSeq" id="NP_568981.2">
    <molecule id="Q9C5U8-1"/>
    <property type="nucleotide sequence ID" value="NM_125784.3"/>
</dbReference>
<dbReference type="RefSeq" id="NP_851260.1">
    <molecule id="Q9C5U8-2"/>
    <property type="nucleotide sequence ID" value="NM_180929.4"/>
</dbReference>
<dbReference type="SMR" id="Q9C5U8"/>
<dbReference type="BioGRID" id="21751">
    <property type="interactions" value="3"/>
</dbReference>
<dbReference type="FunCoup" id="Q9C5U8">
    <property type="interactions" value="1648"/>
</dbReference>
<dbReference type="IntAct" id="Q9C5U8">
    <property type="interactions" value="1"/>
</dbReference>
<dbReference type="STRING" id="3702.Q9C5U8"/>
<dbReference type="GlyGen" id="Q9C5U8">
    <property type="glycosylation" value="1 site"/>
</dbReference>
<dbReference type="iPTMnet" id="Q9C5U8"/>
<dbReference type="PaxDb" id="3702-AT5G63890.2"/>
<dbReference type="ProteomicsDB" id="230200">
    <molecule id="Q9C5U8-1"/>
</dbReference>
<dbReference type="EnsemblPlants" id="AT5G63890.1">
    <molecule id="Q9C5U8-2"/>
    <property type="protein sequence ID" value="AT5G63890.1"/>
    <property type="gene ID" value="AT5G63890"/>
</dbReference>
<dbReference type="EnsemblPlants" id="AT5G63890.2">
    <molecule id="Q9C5U8-1"/>
    <property type="protein sequence ID" value="AT5G63890.2"/>
    <property type="gene ID" value="AT5G63890"/>
</dbReference>
<dbReference type="GeneID" id="836509"/>
<dbReference type="Gramene" id="AT5G63890.1">
    <molecule id="Q9C5U8-2"/>
    <property type="protein sequence ID" value="AT5G63890.1"/>
    <property type="gene ID" value="AT5G63890"/>
</dbReference>
<dbReference type="Gramene" id="AT5G63890.2">
    <molecule id="Q9C5U8-1"/>
    <property type="protein sequence ID" value="AT5G63890.2"/>
    <property type="gene ID" value="AT5G63890"/>
</dbReference>
<dbReference type="KEGG" id="ath:AT5G63890"/>
<dbReference type="Araport" id="AT5G63890"/>
<dbReference type="TAIR" id="AT5G63890">
    <property type="gene designation" value="HDH"/>
</dbReference>
<dbReference type="eggNOG" id="KOG2697">
    <property type="taxonomic scope" value="Eukaryota"/>
</dbReference>
<dbReference type="InParanoid" id="Q9C5U8"/>
<dbReference type="OMA" id="YIAGPNH"/>
<dbReference type="OrthoDB" id="1703565at2759"/>
<dbReference type="PhylomeDB" id="Q9C5U8"/>
<dbReference type="UniPathway" id="UPA00031">
    <property type="reaction ID" value="UER00014"/>
</dbReference>
<dbReference type="PRO" id="PR:Q9C5U8"/>
<dbReference type="Proteomes" id="UP000006548">
    <property type="component" value="Chromosome 5"/>
</dbReference>
<dbReference type="ExpressionAtlas" id="Q9C5U8">
    <property type="expression patterns" value="baseline and differential"/>
</dbReference>
<dbReference type="GO" id="GO:0009507">
    <property type="term" value="C:chloroplast"/>
    <property type="evidence" value="ECO:0007005"/>
    <property type="project" value="TAIR"/>
</dbReference>
<dbReference type="GO" id="GO:0009570">
    <property type="term" value="C:chloroplast stroma"/>
    <property type="evidence" value="ECO:0007005"/>
    <property type="project" value="TAIR"/>
</dbReference>
<dbReference type="GO" id="GO:0005829">
    <property type="term" value="C:cytosol"/>
    <property type="evidence" value="ECO:0007005"/>
    <property type="project" value="TAIR"/>
</dbReference>
<dbReference type="GO" id="GO:0009536">
    <property type="term" value="C:plastid"/>
    <property type="evidence" value="ECO:0007005"/>
    <property type="project" value="TAIR"/>
</dbReference>
<dbReference type="GO" id="GO:0004399">
    <property type="term" value="F:histidinol dehydrogenase activity"/>
    <property type="evidence" value="ECO:0000304"/>
    <property type="project" value="TAIR"/>
</dbReference>
<dbReference type="GO" id="GO:0046872">
    <property type="term" value="F:metal ion binding"/>
    <property type="evidence" value="ECO:0007669"/>
    <property type="project" value="UniProtKB-KW"/>
</dbReference>
<dbReference type="GO" id="GO:0051287">
    <property type="term" value="F:NAD binding"/>
    <property type="evidence" value="ECO:0007669"/>
    <property type="project" value="InterPro"/>
</dbReference>
<dbReference type="GO" id="GO:0000105">
    <property type="term" value="P:L-histidine biosynthetic process"/>
    <property type="evidence" value="ECO:0007669"/>
    <property type="project" value="UniProtKB-UniPathway"/>
</dbReference>
<dbReference type="GO" id="GO:0009555">
    <property type="term" value="P:pollen development"/>
    <property type="evidence" value="ECO:0000315"/>
    <property type="project" value="TAIR"/>
</dbReference>
<dbReference type="GO" id="GO:0009411">
    <property type="term" value="P:response to UV"/>
    <property type="evidence" value="ECO:0000270"/>
    <property type="project" value="TAIR"/>
</dbReference>
<dbReference type="CDD" id="cd06572">
    <property type="entry name" value="Histidinol_dh"/>
    <property type="match status" value="1"/>
</dbReference>
<dbReference type="FunFam" id="1.20.5.1300:FF:000002">
    <property type="entry name" value="Histidinol dehydrogenase, chloroplastic"/>
    <property type="match status" value="1"/>
</dbReference>
<dbReference type="FunFam" id="3.40.50.1980:FF:000011">
    <property type="entry name" value="Histidinol dehydrogenase, chloroplastic"/>
    <property type="match status" value="1"/>
</dbReference>
<dbReference type="FunFam" id="3.40.50.1980:FF:000019">
    <property type="entry name" value="Histidinol dehydrogenase, chloroplastic"/>
    <property type="match status" value="1"/>
</dbReference>
<dbReference type="Gene3D" id="1.20.5.1300">
    <property type="match status" value="1"/>
</dbReference>
<dbReference type="Gene3D" id="3.40.50.1980">
    <property type="entry name" value="Nitrogenase molybdenum iron protein domain"/>
    <property type="match status" value="2"/>
</dbReference>
<dbReference type="HAMAP" id="MF_01024">
    <property type="entry name" value="HisD"/>
    <property type="match status" value="1"/>
</dbReference>
<dbReference type="InterPro" id="IPR016161">
    <property type="entry name" value="Ald_DH/histidinol_DH"/>
</dbReference>
<dbReference type="InterPro" id="IPR001692">
    <property type="entry name" value="Histidinol_DH_CS"/>
</dbReference>
<dbReference type="InterPro" id="IPR022695">
    <property type="entry name" value="Histidinol_DH_monofunct"/>
</dbReference>
<dbReference type="InterPro" id="IPR012131">
    <property type="entry name" value="Hstdl_DH"/>
</dbReference>
<dbReference type="NCBIfam" id="TIGR00069">
    <property type="entry name" value="hisD"/>
    <property type="match status" value="1"/>
</dbReference>
<dbReference type="PANTHER" id="PTHR21256:SF2">
    <property type="entry name" value="HISTIDINE BIOSYNTHESIS TRIFUNCTIONAL PROTEIN"/>
    <property type="match status" value="1"/>
</dbReference>
<dbReference type="PANTHER" id="PTHR21256">
    <property type="entry name" value="HISTIDINOL DEHYDROGENASE HDH"/>
    <property type="match status" value="1"/>
</dbReference>
<dbReference type="Pfam" id="PF00815">
    <property type="entry name" value="Histidinol_dh"/>
    <property type="match status" value="1"/>
</dbReference>
<dbReference type="PIRSF" id="PIRSF000099">
    <property type="entry name" value="Histidinol_dh"/>
    <property type="match status" value="1"/>
</dbReference>
<dbReference type="PRINTS" id="PR00083">
    <property type="entry name" value="HOLDHDRGNASE"/>
</dbReference>
<dbReference type="SUPFAM" id="SSF53720">
    <property type="entry name" value="ALDH-like"/>
    <property type="match status" value="1"/>
</dbReference>
<dbReference type="PROSITE" id="PS00611">
    <property type="entry name" value="HISOL_DEHYDROGENASE"/>
    <property type="match status" value="1"/>
</dbReference>
<name>HIS8_ARATH</name>
<sequence>MSLNLSRLSLLSSPRISISTHAPRKGYVCCSMKSYRLSELSSSQVDSLKSRPRIDFSSIFATVNPIIDAVRSNGDNAVKEYTERFDKVQLNKVVEDMSELSVPELDSNVKEAFDVAYDNIYAFHLAQKSTEKSVENMKGVRCKRVSRSIGSVGLYVPGGTAVLPSTALMLAIPAQIAGCKTVVLATPPSKDGSICKEVLYCAKRAGVTHILKAGGAQAIAAMAWGTDSCPKVEKIFGPGNQYVTAAKMILQNSEAMVSIDMPAGPSEVLVIADEHASPVYIAADLLSQAEHGPDSQVVLVVVGDSVDLNAIEEEIAKQCKSLPRGEFASKALSHSFTVFARDMIEAISFSNLYAPEHLIINVKDAEKWEGLIENAGSVFIGPWTPESVGDYASGTNHVLPTYGYARMYSGVSLDSFLKFMTVQSLTEEGLRNLGPYVATMAEIEGLDAHKRAVTLRLKDIEAKQLA</sequence>
<comment type="function">
    <text evidence="1">Catalyzes the sequential NAD-dependent oxidations of L-histidinol to L-histidinaldehyde and then to L-histidine.</text>
</comment>
<comment type="catalytic activity">
    <reaction>
        <text>L-histidinol + 2 NAD(+) + H2O = L-histidine + 2 NADH + 3 H(+)</text>
        <dbReference type="Rhea" id="RHEA:20641"/>
        <dbReference type="ChEBI" id="CHEBI:15377"/>
        <dbReference type="ChEBI" id="CHEBI:15378"/>
        <dbReference type="ChEBI" id="CHEBI:57540"/>
        <dbReference type="ChEBI" id="CHEBI:57595"/>
        <dbReference type="ChEBI" id="CHEBI:57699"/>
        <dbReference type="ChEBI" id="CHEBI:57945"/>
        <dbReference type="EC" id="1.1.1.23"/>
    </reaction>
</comment>
<comment type="cofactor">
    <cofactor evidence="1">
        <name>Zn(2+)</name>
        <dbReference type="ChEBI" id="CHEBI:29105"/>
    </cofactor>
    <text evidence="1">Binds 1 zinc ion per subunit.</text>
</comment>
<comment type="pathway">
    <text>Amino-acid biosynthesis; L-histidine biosynthesis; L-histidine from 5-phospho-alpha-D-ribose 1-diphosphate: step 9/9.</text>
</comment>
<comment type="subcellular location">
    <subcellularLocation>
        <location>Plastid</location>
        <location>Chloroplast</location>
    </subcellularLocation>
</comment>
<comment type="alternative products">
    <event type="alternative splicing"/>
    <isoform>
        <id>Q9C5U8-1</id>
        <name>1</name>
        <sequence type="displayed"/>
    </isoform>
    <isoform>
        <id>Q9C5U8-2</id>
        <name>2</name>
        <sequence type="described" ref="VSP_047341"/>
    </isoform>
</comment>
<comment type="similarity">
    <text evidence="3">Belongs to the histidinol dehydrogenase family.</text>
</comment>